<keyword id="KW-0408">Iron</keyword>
<keyword id="KW-0456">Lyase</keyword>
<keyword id="KW-0464">Manganese</keyword>
<keyword id="KW-1185">Reference proteome</keyword>
<sequence>MEHTWRWFGPDDPITLDEIRQTGATGIVTALHEIPNGEIWPEAAIAERKRLIEASGLAWSVVESVPVHEDIKQGRGDCETHIARYQQTLRNLAACGIDVVCYNFMPVLDWTRTDLAWPLPGGGTALRFDQTAFAAFDLYLLERPGAEADYDATERDAARAYLDGLDESARQRLIDTIIAGLPGAEEHYSLARFREVIAEYAEIDAERLRDNLGHFLRAVVPVAEEVGIRLAIHPDDPPRPLLGLPRVVSTPRDVQWILDAAPSPANGLTFCTGSYGVSAAIDLVAMGERFAERIYFAHLRATQRENDPRSFHESAHLDGDVDMVGVIKALVGEERRRERDGGPRLPLRPDHGHHLLDDLSRDTRPGYPLIGRLKGLAELRGVETAIKQLAI</sequence>
<comment type="function">
    <text evidence="1">Catalyzes the dehydration of D-mannonate.</text>
</comment>
<comment type="catalytic activity">
    <reaction evidence="1">
        <text>D-mannonate = 2-dehydro-3-deoxy-D-gluconate + H2O</text>
        <dbReference type="Rhea" id="RHEA:20097"/>
        <dbReference type="ChEBI" id="CHEBI:15377"/>
        <dbReference type="ChEBI" id="CHEBI:17767"/>
        <dbReference type="ChEBI" id="CHEBI:57990"/>
        <dbReference type="EC" id="4.2.1.8"/>
    </reaction>
</comment>
<comment type="cofactor">
    <cofactor evidence="1">
        <name>Fe(2+)</name>
        <dbReference type="ChEBI" id="CHEBI:29033"/>
    </cofactor>
    <cofactor evidence="1">
        <name>Mn(2+)</name>
        <dbReference type="ChEBI" id="CHEBI:29035"/>
    </cofactor>
</comment>
<comment type="pathway">
    <text evidence="1">Carbohydrate metabolism; pentose and glucuronate interconversion.</text>
</comment>
<comment type="similarity">
    <text evidence="1">Belongs to the mannonate dehydratase family.</text>
</comment>
<proteinExistence type="inferred from homology"/>
<organism>
    <name type="scientific">Chromohalobacter salexigens (strain ATCC BAA-138 / DSM 3043 / CIP 106854 / NCIMB 13768 / 1H11)</name>
    <dbReference type="NCBI Taxonomy" id="290398"/>
    <lineage>
        <taxon>Bacteria</taxon>
        <taxon>Pseudomonadati</taxon>
        <taxon>Pseudomonadota</taxon>
        <taxon>Gammaproteobacteria</taxon>
        <taxon>Oceanospirillales</taxon>
        <taxon>Halomonadaceae</taxon>
        <taxon>Chromohalobacter</taxon>
    </lineage>
</organism>
<name>UXUA_CHRSD</name>
<gene>
    <name evidence="1" type="primary">uxuA</name>
    <name type="ordered locus">Csal_2980</name>
</gene>
<evidence type="ECO:0000255" key="1">
    <source>
        <dbReference type="HAMAP-Rule" id="MF_00106"/>
    </source>
</evidence>
<evidence type="ECO:0000256" key="2">
    <source>
        <dbReference type="SAM" id="MobiDB-lite"/>
    </source>
</evidence>
<dbReference type="EC" id="4.2.1.8" evidence="1"/>
<dbReference type="EMBL" id="CP000285">
    <property type="protein sequence ID" value="ABE60325.1"/>
    <property type="molecule type" value="Genomic_DNA"/>
</dbReference>
<dbReference type="RefSeq" id="WP_011508271.1">
    <property type="nucleotide sequence ID" value="NC_007963.1"/>
</dbReference>
<dbReference type="SMR" id="Q1QT83"/>
<dbReference type="STRING" id="290398.Csal_2980"/>
<dbReference type="GeneID" id="95335669"/>
<dbReference type="KEGG" id="csa:Csal_2980"/>
<dbReference type="eggNOG" id="COG1312">
    <property type="taxonomic scope" value="Bacteria"/>
</dbReference>
<dbReference type="HOGENOM" id="CLU_058621_2_0_6"/>
<dbReference type="OrthoDB" id="9780250at2"/>
<dbReference type="BRENDA" id="4.2.1.8">
    <property type="organism ID" value="8057"/>
</dbReference>
<dbReference type="UniPathway" id="UPA00246"/>
<dbReference type="Proteomes" id="UP000000239">
    <property type="component" value="Chromosome"/>
</dbReference>
<dbReference type="GO" id="GO:0008198">
    <property type="term" value="F:ferrous iron binding"/>
    <property type="evidence" value="ECO:0007669"/>
    <property type="project" value="TreeGrafter"/>
</dbReference>
<dbReference type="GO" id="GO:0030145">
    <property type="term" value="F:manganese ion binding"/>
    <property type="evidence" value="ECO:0007669"/>
    <property type="project" value="TreeGrafter"/>
</dbReference>
<dbReference type="GO" id="GO:0008927">
    <property type="term" value="F:mannonate dehydratase activity"/>
    <property type="evidence" value="ECO:0007669"/>
    <property type="project" value="UniProtKB-UniRule"/>
</dbReference>
<dbReference type="GO" id="GO:0042840">
    <property type="term" value="P:D-glucuronate catabolic process"/>
    <property type="evidence" value="ECO:0007669"/>
    <property type="project" value="TreeGrafter"/>
</dbReference>
<dbReference type="Gene3D" id="3.20.20.150">
    <property type="entry name" value="Divalent-metal-dependent TIM barrel enzymes"/>
    <property type="match status" value="1"/>
</dbReference>
<dbReference type="HAMAP" id="MF_00106">
    <property type="entry name" value="UxuA"/>
    <property type="match status" value="1"/>
</dbReference>
<dbReference type="InterPro" id="IPR004628">
    <property type="entry name" value="Man_deHydtase"/>
</dbReference>
<dbReference type="InterPro" id="IPR036237">
    <property type="entry name" value="Xyl_isomerase-like_sf"/>
</dbReference>
<dbReference type="NCBIfam" id="NF003027">
    <property type="entry name" value="PRK03906.1"/>
    <property type="match status" value="1"/>
</dbReference>
<dbReference type="NCBIfam" id="TIGR00695">
    <property type="entry name" value="uxuA"/>
    <property type="match status" value="1"/>
</dbReference>
<dbReference type="PANTHER" id="PTHR30387">
    <property type="entry name" value="MANNONATE DEHYDRATASE"/>
    <property type="match status" value="1"/>
</dbReference>
<dbReference type="PANTHER" id="PTHR30387:SF2">
    <property type="entry name" value="MANNONATE DEHYDRATASE"/>
    <property type="match status" value="1"/>
</dbReference>
<dbReference type="Pfam" id="PF03786">
    <property type="entry name" value="UxuA"/>
    <property type="match status" value="1"/>
</dbReference>
<dbReference type="PIRSF" id="PIRSF016049">
    <property type="entry name" value="Man_dehyd"/>
    <property type="match status" value="1"/>
</dbReference>
<dbReference type="SUPFAM" id="SSF51658">
    <property type="entry name" value="Xylose isomerase-like"/>
    <property type="match status" value="1"/>
</dbReference>
<feature type="chain" id="PRO_1000034323" description="Mannonate dehydratase">
    <location>
        <begin position="1"/>
        <end position="391"/>
    </location>
</feature>
<feature type="region of interest" description="Disordered" evidence="2">
    <location>
        <begin position="334"/>
        <end position="359"/>
    </location>
</feature>
<reference key="1">
    <citation type="journal article" date="2011" name="Stand. Genomic Sci.">
        <title>Complete genome sequence of the halophilic and highly halotolerant Chromohalobacter salexigens type strain (1H11(T)).</title>
        <authorList>
            <person name="Copeland A."/>
            <person name="O'Connor K."/>
            <person name="Lucas S."/>
            <person name="Lapidus A."/>
            <person name="Berry K.W."/>
            <person name="Detter J.C."/>
            <person name="Del Rio T.G."/>
            <person name="Hammon N."/>
            <person name="Dalin E."/>
            <person name="Tice H."/>
            <person name="Pitluck S."/>
            <person name="Bruce D."/>
            <person name="Goodwin L."/>
            <person name="Han C."/>
            <person name="Tapia R."/>
            <person name="Saunders E."/>
            <person name="Schmutz J."/>
            <person name="Brettin T."/>
            <person name="Larimer F."/>
            <person name="Land M."/>
            <person name="Hauser L."/>
            <person name="Vargas C."/>
            <person name="Nieto J.J."/>
            <person name="Kyrpides N.C."/>
            <person name="Ivanova N."/>
            <person name="Goker M."/>
            <person name="Klenk H.P."/>
            <person name="Csonka L.N."/>
            <person name="Woyke T."/>
        </authorList>
    </citation>
    <scope>NUCLEOTIDE SEQUENCE [LARGE SCALE GENOMIC DNA]</scope>
    <source>
        <strain>ATCC BAA-138 / DSM 3043 / CIP 106854 / NCIMB 13768 / 1H11</strain>
    </source>
</reference>
<accession>Q1QT83</accession>
<protein>
    <recommendedName>
        <fullName evidence="1">Mannonate dehydratase</fullName>
        <ecNumber evidence="1">4.2.1.8</ecNumber>
    </recommendedName>
    <alternativeName>
        <fullName evidence="1">D-mannonate hydro-lyase</fullName>
    </alternativeName>
</protein>